<keyword id="KW-0687">Ribonucleoprotein</keyword>
<keyword id="KW-0689">Ribosomal protein</keyword>
<keyword id="KW-0694">RNA-binding</keyword>
<keyword id="KW-0699">rRNA-binding</keyword>
<evidence type="ECO:0000255" key="1">
    <source>
        <dbReference type="HAMAP-Rule" id="MF_00531"/>
    </source>
</evidence>
<evidence type="ECO:0000305" key="2"/>
<reference key="1">
    <citation type="submission" date="2007-11" db="EMBL/GenBank/DDBJ databases">
        <title>Complete sequence of chromosome of Shewanella baltica OS195.</title>
        <authorList>
            <consortium name="US DOE Joint Genome Institute"/>
            <person name="Copeland A."/>
            <person name="Lucas S."/>
            <person name="Lapidus A."/>
            <person name="Barry K."/>
            <person name="Glavina del Rio T."/>
            <person name="Dalin E."/>
            <person name="Tice H."/>
            <person name="Pitluck S."/>
            <person name="Chain P."/>
            <person name="Malfatti S."/>
            <person name="Shin M."/>
            <person name="Vergez L."/>
            <person name="Schmutz J."/>
            <person name="Larimer F."/>
            <person name="Land M."/>
            <person name="Hauser L."/>
            <person name="Kyrpides N."/>
            <person name="Kim E."/>
            <person name="Brettar I."/>
            <person name="Rodrigues J."/>
            <person name="Konstantinidis K."/>
            <person name="Klappenbach J."/>
            <person name="Hofle M."/>
            <person name="Tiedje J."/>
            <person name="Richardson P."/>
        </authorList>
    </citation>
    <scope>NUCLEOTIDE SEQUENCE [LARGE SCALE GENOMIC DNA]</scope>
    <source>
        <strain>OS195</strain>
    </source>
</reference>
<organism>
    <name type="scientific">Shewanella baltica (strain OS195)</name>
    <dbReference type="NCBI Taxonomy" id="399599"/>
    <lineage>
        <taxon>Bacteria</taxon>
        <taxon>Pseudomonadati</taxon>
        <taxon>Pseudomonadota</taxon>
        <taxon>Gammaproteobacteria</taxon>
        <taxon>Alteromonadales</taxon>
        <taxon>Shewanellaceae</taxon>
        <taxon>Shewanella</taxon>
    </lineage>
</organism>
<comment type="function">
    <text evidence="1">Protein S19 forms a complex with S13 that binds strongly to the 16S ribosomal RNA.</text>
</comment>
<comment type="similarity">
    <text evidence="1">Belongs to the universal ribosomal protein uS19 family.</text>
</comment>
<sequence length="92" mass="10472">MPRSLKKGPFIDLHLLKKVEKAMEAGDKKPIKTWSRRSMIIPNMIGLTIAVHNGRQHVPVFVTDEMIGHKLGEFSPTRTYRGHAADKKAKKR</sequence>
<accession>A9KWA6</accession>
<protein>
    <recommendedName>
        <fullName evidence="1">Small ribosomal subunit protein uS19</fullName>
    </recommendedName>
    <alternativeName>
        <fullName evidence="2">30S ribosomal protein S19</fullName>
    </alternativeName>
</protein>
<proteinExistence type="inferred from homology"/>
<feature type="chain" id="PRO_1000081793" description="Small ribosomal subunit protein uS19">
    <location>
        <begin position="1"/>
        <end position="92"/>
    </location>
</feature>
<name>RS19_SHEB9</name>
<gene>
    <name evidence="1" type="primary">rpsS</name>
    <name type="ordered locus">Sbal195_0204</name>
</gene>
<dbReference type="EMBL" id="CP000891">
    <property type="protein sequence ID" value="ABX47386.1"/>
    <property type="molecule type" value="Genomic_DNA"/>
</dbReference>
<dbReference type="RefSeq" id="WP_006083596.1">
    <property type="nucleotide sequence ID" value="NC_009997.1"/>
</dbReference>
<dbReference type="SMR" id="A9KWA6"/>
<dbReference type="GeneID" id="94726190"/>
<dbReference type="KEGG" id="sbn:Sbal195_0204"/>
<dbReference type="HOGENOM" id="CLU_144911_0_1_6"/>
<dbReference type="Proteomes" id="UP000000770">
    <property type="component" value="Chromosome"/>
</dbReference>
<dbReference type="GO" id="GO:0005737">
    <property type="term" value="C:cytoplasm"/>
    <property type="evidence" value="ECO:0007669"/>
    <property type="project" value="UniProtKB-ARBA"/>
</dbReference>
<dbReference type="GO" id="GO:0015935">
    <property type="term" value="C:small ribosomal subunit"/>
    <property type="evidence" value="ECO:0007669"/>
    <property type="project" value="InterPro"/>
</dbReference>
<dbReference type="GO" id="GO:0019843">
    <property type="term" value="F:rRNA binding"/>
    <property type="evidence" value="ECO:0007669"/>
    <property type="project" value="UniProtKB-UniRule"/>
</dbReference>
<dbReference type="GO" id="GO:0003735">
    <property type="term" value="F:structural constituent of ribosome"/>
    <property type="evidence" value="ECO:0007669"/>
    <property type="project" value="InterPro"/>
</dbReference>
<dbReference type="GO" id="GO:0000028">
    <property type="term" value="P:ribosomal small subunit assembly"/>
    <property type="evidence" value="ECO:0007669"/>
    <property type="project" value="TreeGrafter"/>
</dbReference>
<dbReference type="GO" id="GO:0006412">
    <property type="term" value="P:translation"/>
    <property type="evidence" value="ECO:0007669"/>
    <property type="project" value="UniProtKB-UniRule"/>
</dbReference>
<dbReference type="FunFam" id="3.30.860.10:FF:000001">
    <property type="entry name" value="30S ribosomal protein S19"/>
    <property type="match status" value="1"/>
</dbReference>
<dbReference type="Gene3D" id="3.30.860.10">
    <property type="entry name" value="30s Ribosomal Protein S19, Chain A"/>
    <property type="match status" value="1"/>
</dbReference>
<dbReference type="HAMAP" id="MF_00531">
    <property type="entry name" value="Ribosomal_uS19"/>
    <property type="match status" value="1"/>
</dbReference>
<dbReference type="InterPro" id="IPR002222">
    <property type="entry name" value="Ribosomal_uS19"/>
</dbReference>
<dbReference type="InterPro" id="IPR005732">
    <property type="entry name" value="Ribosomal_uS19_bac-type"/>
</dbReference>
<dbReference type="InterPro" id="IPR020934">
    <property type="entry name" value="Ribosomal_uS19_CS"/>
</dbReference>
<dbReference type="InterPro" id="IPR023575">
    <property type="entry name" value="Ribosomal_uS19_SF"/>
</dbReference>
<dbReference type="NCBIfam" id="TIGR01050">
    <property type="entry name" value="rpsS_bact"/>
    <property type="match status" value="1"/>
</dbReference>
<dbReference type="PANTHER" id="PTHR11880">
    <property type="entry name" value="RIBOSOMAL PROTEIN S19P FAMILY MEMBER"/>
    <property type="match status" value="1"/>
</dbReference>
<dbReference type="PANTHER" id="PTHR11880:SF8">
    <property type="entry name" value="SMALL RIBOSOMAL SUBUNIT PROTEIN US19M"/>
    <property type="match status" value="1"/>
</dbReference>
<dbReference type="Pfam" id="PF00203">
    <property type="entry name" value="Ribosomal_S19"/>
    <property type="match status" value="1"/>
</dbReference>
<dbReference type="PIRSF" id="PIRSF002144">
    <property type="entry name" value="Ribosomal_S19"/>
    <property type="match status" value="1"/>
</dbReference>
<dbReference type="PRINTS" id="PR00975">
    <property type="entry name" value="RIBOSOMALS19"/>
</dbReference>
<dbReference type="SUPFAM" id="SSF54570">
    <property type="entry name" value="Ribosomal protein S19"/>
    <property type="match status" value="1"/>
</dbReference>
<dbReference type="PROSITE" id="PS00323">
    <property type="entry name" value="RIBOSOMAL_S19"/>
    <property type="match status" value="1"/>
</dbReference>